<dbReference type="EMBL" id="L05777">
    <property type="protein sequence ID" value="AAA35269.1"/>
    <property type="molecule type" value="Genomic_DNA"/>
</dbReference>
<dbReference type="EMBL" id="L05772">
    <property type="status" value="NOT_ANNOTATED_CDS"/>
    <property type="molecule type" value="Genomic_DNA"/>
</dbReference>
<dbReference type="EMBL" id="CR382125">
    <property type="protein sequence ID" value="CAG99527.1"/>
    <property type="molecule type" value="Genomic_DNA"/>
</dbReference>
<dbReference type="RefSeq" id="XP_454440.1">
    <property type="nucleotide sequence ID" value="XM_454440.1"/>
</dbReference>
<dbReference type="PDB" id="5IT7">
    <property type="method" value="EM"/>
    <property type="resolution" value="3.60 A"/>
    <property type="chains" value="WW=2-63"/>
</dbReference>
<dbReference type="PDB" id="6UZ7">
    <property type="method" value="EM"/>
    <property type="resolution" value="3.60 A"/>
    <property type="chains" value="AW=1-155"/>
</dbReference>
<dbReference type="PDBsum" id="5IT7"/>
<dbReference type="PDBsum" id="6UZ7"/>
<dbReference type="EMDB" id="EMD-20952"/>
<dbReference type="EMDB" id="EMD-8123"/>
<dbReference type="SMR" id="P38665"/>
<dbReference type="FunCoup" id="P38665">
    <property type="interactions" value="947"/>
</dbReference>
<dbReference type="STRING" id="284590.P38665"/>
<dbReference type="PaxDb" id="284590-P38665"/>
<dbReference type="KEGG" id="kla:KLLA0_E10869g"/>
<dbReference type="eggNOG" id="KOG1722">
    <property type="taxonomic scope" value="Eukaryota"/>
</dbReference>
<dbReference type="HOGENOM" id="CLU_106411_0_0_1"/>
<dbReference type="InParanoid" id="P38665"/>
<dbReference type="OMA" id="PGHGKKM"/>
<dbReference type="Proteomes" id="UP000000598">
    <property type="component" value="Chromosome E"/>
</dbReference>
<dbReference type="GO" id="GO:0022625">
    <property type="term" value="C:cytosolic large ribosomal subunit"/>
    <property type="evidence" value="ECO:0007669"/>
    <property type="project" value="TreeGrafter"/>
</dbReference>
<dbReference type="GO" id="GO:0003729">
    <property type="term" value="F:mRNA binding"/>
    <property type="evidence" value="ECO:0007669"/>
    <property type="project" value="TreeGrafter"/>
</dbReference>
<dbReference type="GO" id="GO:0003735">
    <property type="term" value="F:structural constituent of ribosome"/>
    <property type="evidence" value="ECO:0007669"/>
    <property type="project" value="InterPro"/>
</dbReference>
<dbReference type="GO" id="GO:0002181">
    <property type="term" value="P:cytoplasmic translation"/>
    <property type="evidence" value="ECO:0007669"/>
    <property type="project" value="TreeGrafter"/>
</dbReference>
<dbReference type="CDD" id="cd00472">
    <property type="entry name" value="Ribosomal_L24e_L24"/>
    <property type="match status" value="1"/>
</dbReference>
<dbReference type="FunFam" id="2.30.170.20:FF:000002">
    <property type="entry name" value="60S ribosomal protein L24"/>
    <property type="match status" value="1"/>
</dbReference>
<dbReference type="Gene3D" id="6.10.250.1270">
    <property type="match status" value="1"/>
</dbReference>
<dbReference type="Gene3D" id="2.30.170.20">
    <property type="entry name" value="Ribosomal protein L24e"/>
    <property type="match status" value="1"/>
</dbReference>
<dbReference type="InterPro" id="IPR038630">
    <property type="entry name" value="L24e/L24_sf"/>
</dbReference>
<dbReference type="InterPro" id="IPR056366">
    <property type="entry name" value="Ribosomal_eL24"/>
</dbReference>
<dbReference type="InterPro" id="IPR000988">
    <property type="entry name" value="Ribosomal_eL24-rel_N"/>
</dbReference>
<dbReference type="InterPro" id="IPR023442">
    <property type="entry name" value="Ribosomal_eL24_CS"/>
</dbReference>
<dbReference type="PANTHER" id="PTHR10792">
    <property type="entry name" value="60S RIBOSOMAL PROTEIN L24"/>
    <property type="match status" value="1"/>
</dbReference>
<dbReference type="PANTHER" id="PTHR10792:SF1">
    <property type="entry name" value="RIBOSOMAL PROTEIN L24"/>
    <property type="match status" value="1"/>
</dbReference>
<dbReference type="Pfam" id="PF01246">
    <property type="entry name" value="Ribosomal_L24e"/>
    <property type="match status" value="1"/>
</dbReference>
<dbReference type="SUPFAM" id="SSF57716">
    <property type="entry name" value="Glucocorticoid receptor-like (DNA-binding domain)"/>
    <property type="match status" value="1"/>
</dbReference>
<dbReference type="PROSITE" id="PS01073">
    <property type="entry name" value="RIBOSOMAL_L24E"/>
    <property type="match status" value="1"/>
</dbReference>
<gene>
    <name type="primary">RPL24</name>
    <name type="synonym">RPL30</name>
    <name type="ordered locus">KLLA0E10857g</name>
</gene>
<accession>P38665</accession>
<keyword id="KW-0002">3D-structure</keyword>
<keyword id="KW-1185">Reference proteome</keyword>
<keyword id="KW-0687">Ribonucleoprotein</keyword>
<keyword id="KW-0689">Ribosomal protein</keyword>
<sequence>MKVEIDSFSGAKIYPGRGTLFVRGDSKIFRFQSSKSASLFHQRKNPRRIAWTVLYRRHHKKGITEEVARKRTRKSVKAQRAVVGASLELIKERRSLKPEVRKAQRDEKKKADKEKKKADKAARKSEKAKLAAAQGSKVSKQQAKGAFQKVAATSR</sequence>
<protein>
    <recommendedName>
        <fullName evidence="2">Large ribosomal subunit protein eL24</fullName>
    </recommendedName>
    <alternativeName>
        <fullName>60S ribosomal protein L24</fullName>
    </alternativeName>
    <alternativeName>
        <fullName>Ribosomal protein L30</fullName>
    </alternativeName>
</protein>
<reference key="1">
    <citation type="submission" date="1992-11" db="EMBL/GenBank/DDBJ databases">
        <authorList>
            <person name="Warner J.R."/>
            <person name="Eng F.J."/>
        </authorList>
    </citation>
    <scope>NUCLEOTIDE SEQUENCE [GENOMIC DNA]</scope>
</reference>
<reference key="2">
    <citation type="journal article" date="1991" name="Cell">
        <title>Structural basis for the regulation of splicing of a yeast messenger RNA.</title>
        <authorList>
            <person name="Eng F.J."/>
            <person name="Warner J.R."/>
        </authorList>
    </citation>
    <scope>NUCLEOTIDE SEQUENCE [GENOMIC DNA]</scope>
</reference>
<reference key="3">
    <citation type="journal article" date="2004" name="Nature">
        <title>Genome evolution in yeasts.</title>
        <authorList>
            <person name="Dujon B."/>
            <person name="Sherman D."/>
            <person name="Fischer G."/>
            <person name="Durrens P."/>
            <person name="Casaregola S."/>
            <person name="Lafontaine I."/>
            <person name="de Montigny J."/>
            <person name="Marck C."/>
            <person name="Neuveglise C."/>
            <person name="Talla E."/>
            <person name="Goffard N."/>
            <person name="Frangeul L."/>
            <person name="Aigle M."/>
            <person name="Anthouard V."/>
            <person name="Babour A."/>
            <person name="Barbe V."/>
            <person name="Barnay S."/>
            <person name="Blanchin S."/>
            <person name="Beckerich J.-M."/>
            <person name="Beyne E."/>
            <person name="Bleykasten C."/>
            <person name="Boisrame A."/>
            <person name="Boyer J."/>
            <person name="Cattolico L."/>
            <person name="Confanioleri F."/>
            <person name="de Daruvar A."/>
            <person name="Despons L."/>
            <person name="Fabre E."/>
            <person name="Fairhead C."/>
            <person name="Ferry-Dumazet H."/>
            <person name="Groppi A."/>
            <person name="Hantraye F."/>
            <person name="Hennequin C."/>
            <person name="Jauniaux N."/>
            <person name="Joyet P."/>
            <person name="Kachouri R."/>
            <person name="Kerrest A."/>
            <person name="Koszul R."/>
            <person name="Lemaire M."/>
            <person name="Lesur I."/>
            <person name="Ma L."/>
            <person name="Muller H."/>
            <person name="Nicaud J.-M."/>
            <person name="Nikolski M."/>
            <person name="Oztas S."/>
            <person name="Ozier-Kalogeropoulos O."/>
            <person name="Pellenz S."/>
            <person name="Potier S."/>
            <person name="Richard G.-F."/>
            <person name="Straub M.-L."/>
            <person name="Suleau A."/>
            <person name="Swennen D."/>
            <person name="Tekaia F."/>
            <person name="Wesolowski-Louvel M."/>
            <person name="Westhof E."/>
            <person name="Wirth B."/>
            <person name="Zeniou-Meyer M."/>
            <person name="Zivanovic Y."/>
            <person name="Bolotin-Fukuhara M."/>
            <person name="Thierry A."/>
            <person name="Bouchier C."/>
            <person name="Caudron B."/>
            <person name="Scarpelli C."/>
            <person name="Gaillardin C."/>
            <person name="Weissenbach J."/>
            <person name="Wincker P."/>
            <person name="Souciet J.-L."/>
        </authorList>
    </citation>
    <scope>NUCLEOTIDE SEQUENCE [LARGE SCALE GENOMIC DNA]</scope>
    <source>
        <strain>ATCC 8585 / CBS 2359 / DSM 70799 / NBRC 1267 / NRRL Y-1140 / WM37</strain>
    </source>
</reference>
<organism>
    <name type="scientific">Kluyveromyces lactis (strain ATCC 8585 / CBS 2359 / DSM 70799 / NBRC 1267 / NRRL Y-1140 / WM37)</name>
    <name type="common">Yeast</name>
    <name type="synonym">Candida sphaerica</name>
    <dbReference type="NCBI Taxonomy" id="284590"/>
    <lineage>
        <taxon>Eukaryota</taxon>
        <taxon>Fungi</taxon>
        <taxon>Dikarya</taxon>
        <taxon>Ascomycota</taxon>
        <taxon>Saccharomycotina</taxon>
        <taxon>Saccharomycetes</taxon>
        <taxon>Saccharomycetales</taxon>
        <taxon>Saccharomycetaceae</taxon>
        <taxon>Kluyveromyces</taxon>
    </lineage>
</organism>
<proteinExistence type="evidence at protein level"/>
<comment type="similarity">
    <text evidence="2">Belongs to the eukaryotic ribosomal protein eL24 family.</text>
</comment>
<feature type="chain" id="PRO_0000136889" description="Large ribosomal subunit protein eL24">
    <location>
        <begin position="1"/>
        <end position="155"/>
    </location>
</feature>
<feature type="region of interest" description="Disordered" evidence="1">
    <location>
        <begin position="94"/>
        <end position="155"/>
    </location>
</feature>
<feature type="compositionally biased region" description="Basic and acidic residues" evidence="1">
    <location>
        <begin position="94"/>
        <end position="129"/>
    </location>
</feature>
<evidence type="ECO:0000256" key="1">
    <source>
        <dbReference type="SAM" id="MobiDB-lite"/>
    </source>
</evidence>
<evidence type="ECO:0000305" key="2"/>
<name>RL24_KLULA</name>